<keyword id="KW-0067">ATP-binding</keyword>
<keyword id="KW-0436">Ligase</keyword>
<keyword id="KW-0547">Nucleotide-binding</keyword>
<keyword id="KW-0648">Protein biosynthesis</keyword>
<keyword id="KW-1185">Reference proteome</keyword>
<protein>
    <recommendedName>
        <fullName evidence="1">Aspartyl/glutamyl-tRNA(Asn/Gln) amidotransferase subunit B</fullName>
        <shortName evidence="1">Asp/Glu-ADT subunit B</shortName>
        <ecNumber evidence="1">6.3.5.-</ecNumber>
    </recommendedName>
</protein>
<proteinExistence type="inferred from homology"/>
<name>GATB_CHLPD</name>
<feature type="chain" id="PRO_1000015956" description="Aspartyl/glutamyl-tRNA(Asn/Gln) amidotransferase subunit B">
    <location>
        <begin position="1"/>
        <end position="475"/>
    </location>
</feature>
<sequence>MKYELVVGLEVHCQLNTNSKAFCGCSALFGKPANTNVCPVCLALPGALPVLNRRVVEDAVKIGLATGCSVASHSILARKNYFYPDLPKGYQISQYEEPICSEGMIRIDVGEGQRDIRLIRIHIEEDAGKSIHDIGEDTYIDVNRSGVPLLEIVSYPDMRTAKEASAYLQKVRQIVKYLGISDGNMEEGSLRCDANVSIRPYGSEEYGTRTEIKNMNSFKNVEKAIEFEANRHSEIIDAGGAIVQETRLWDADKGETRSMRGKEFAHDYRYFPDPDLVPVLVDDDMLERMRLELPEFPEDRAARFVSEFAIPAYDAAVLTVDREVADYFEETVRVSGDAKVASNWVMGEVMRTLKEKYLDIAEFGISSLRLGELIRLIGAGTISNTIAKQVFEIMMSDEAAAEVIVTREGLAQVSDFGAIDMVLQEVLDANPGQLADYRAGKTKLFGFFVGQCMARMKGKGNPAIVNDLLQKKLAG</sequence>
<accession>A1BJ58</accession>
<gene>
    <name evidence="1" type="primary">gatB</name>
    <name type="ordered locus">Cpha266_2447</name>
</gene>
<organism>
    <name type="scientific">Chlorobium phaeobacteroides (strain DSM 266 / SMG 266 / 2430)</name>
    <dbReference type="NCBI Taxonomy" id="290317"/>
    <lineage>
        <taxon>Bacteria</taxon>
        <taxon>Pseudomonadati</taxon>
        <taxon>Chlorobiota</taxon>
        <taxon>Chlorobiia</taxon>
        <taxon>Chlorobiales</taxon>
        <taxon>Chlorobiaceae</taxon>
        <taxon>Chlorobium/Pelodictyon group</taxon>
        <taxon>Chlorobium</taxon>
    </lineage>
</organism>
<dbReference type="EC" id="6.3.5.-" evidence="1"/>
<dbReference type="EMBL" id="CP000492">
    <property type="protein sequence ID" value="ABL66435.1"/>
    <property type="molecule type" value="Genomic_DNA"/>
</dbReference>
<dbReference type="RefSeq" id="WP_011746217.1">
    <property type="nucleotide sequence ID" value="NC_008639.1"/>
</dbReference>
<dbReference type="SMR" id="A1BJ58"/>
<dbReference type="STRING" id="290317.Cpha266_2447"/>
<dbReference type="KEGG" id="cph:Cpha266_2447"/>
<dbReference type="eggNOG" id="COG0064">
    <property type="taxonomic scope" value="Bacteria"/>
</dbReference>
<dbReference type="HOGENOM" id="CLU_019240_0_0_10"/>
<dbReference type="OrthoDB" id="9804078at2"/>
<dbReference type="Proteomes" id="UP000008701">
    <property type="component" value="Chromosome"/>
</dbReference>
<dbReference type="GO" id="GO:0050566">
    <property type="term" value="F:asparaginyl-tRNA synthase (glutamine-hydrolyzing) activity"/>
    <property type="evidence" value="ECO:0007669"/>
    <property type="project" value="RHEA"/>
</dbReference>
<dbReference type="GO" id="GO:0005524">
    <property type="term" value="F:ATP binding"/>
    <property type="evidence" value="ECO:0007669"/>
    <property type="project" value="UniProtKB-KW"/>
</dbReference>
<dbReference type="GO" id="GO:0050567">
    <property type="term" value="F:glutaminyl-tRNA synthase (glutamine-hydrolyzing) activity"/>
    <property type="evidence" value="ECO:0007669"/>
    <property type="project" value="UniProtKB-UniRule"/>
</dbReference>
<dbReference type="GO" id="GO:0070681">
    <property type="term" value="P:glutaminyl-tRNAGln biosynthesis via transamidation"/>
    <property type="evidence" value="ECO:0007669"/>
    <property type="project" value="TreeGrafter"/>
</dbReference>
<dbReference type="GO" id="GO:0006412">
    <property type="term" value="P:translation"/>
    <property type="evidence" value="ECO:0007669"/>
    <property type="project" value="UniProtKB-UniRule"/>
</dbReference>
<dbReference type="FunFam" id="1.10.10.410:FF:000001">
    <property type="entry name" value="Aspartyl/glutamyl-tRNA(Asn/Gln) amidotransferase subunit B"/>
    <property type="match status" value="1"/>
</dbReference>
<dbReference type="FunFam" id="1.10.150.380:FF:000001">
    <property type="entry name" value="Aspartyl/glutamyl-tRNA(Asn/Gln) amidotransferase subunit B"/>
    <property type="match status" value="1"/>
</dbReference>
<dbReference type="Gene3D" id="1.10.10.410">
    <property type="match status" value="1"/>
</dbReference>
<dbReference type="Gene3D" id="1.10.150.380">
    <property type="entry name" value="GatB domain, N-terminal subdomain"/>
    <property type="match status" value="1"/>
</dbReference>
<dbReference type="HAMAP" id="MF_00121">
    <property type="entry name" value="GatB"/>
    <property type="match status" value="1"/>
</dbReference>
<dbReference type="InterPro" id="IPR017959">
    <property type="entry name" value="Asn/Gln-tRNA_amidoTrfase_suB/E"/>
</dbReference>
<dbReference type="InterPro" id="IPR006075">
    <property type="entry name" value="Asn/Gln-tRNA_Trfase_suB/E_cat"/>
</dbReference>
<dbReference type="InterPro" id="IPR018027">
    <property type="entry name" value="Asn/Gln_amidotransferase"/>
</dbReference>
<dbReference type="InterPro" id="IPR003789">
    <property type="entry name" value="Asn/Gln_tRNA_amidoTrase-B-like"/>
</dbReference>
<dbReference type="InterPro" id="IPR004413">
    <property type="entry name" value="GatB"/>
</dbReference>
<dbReference type="InterPro" id="IPR042114">
    <property type="entry name" value="GatB_C_1"/>
</dbReference>
<dbReference type="InterPro" id="IPR023168">
    <property type="entry name" value="GatB_Yqey_C_2"/>
</dbReference>
<dbReference type="InterPro" id="IPR017958">
    <property type="entry name" value="Gln-tRNA_amidoTrfase_suB_CS"/>
</dbReference>
<dbReference type="InterPro" id="IPR014746">
    <property type="entry name" value="Gln_synth/guanido_kin_cat_dom"/>
</dbReference>
<dbReference type="NCBIfam" id="TIGR00133">
    <property type="entry name" value="gatB"/>
    <property type="match status" value="1"/>
</dbReference>
<dbReference type="NCBIfam" id="NF004012">
    <property type="entry name" value="PRK05477.1-2"/>
    <property type="match status" value="1"/>
</dbReference>
<dbReference type="NCBIfam" id="NF004014">
    <property type="entry name" value="PRK05477.1-4"/>
    <property type="match status" value="1"/>
</dbReference>
<dbReference type="NCBIfam" id="NF004015">
    <property type="entry name" value="PRK05477.1-5"/>
    <property type="match status" value="1"/>
</dbReference>
<dbReference type="PANTHER" id="PTHR11659">
    <property type="entry name" value="GLUTAMYL-TRNA GLN AMIDOTRANSFERASE SUBUNIT B MITOCHONDRIAL AND PROKARYOTIC PET112-RELATED"/>
    <property type="match status" value="1"/>
</dbReference>
<dbReference type="PANTHER" id="PTHR11659:SF0">
    <property type="entry name" value="GLUTAMYL-TRNA(GLN) AMIDOTRANSFERASE SUBUNIT B, MITOCHONDRIAL"/>
    <property type="match status" value="1"/>
</dbReference>
<dbReference type="Pfam" id="PF02934">
    <property type="entry name" value="GatB_N"/>
    <property type="match status" value="1"/>
</dbReference>
<dbReference type="Pfam" id="PF02637">
    <property type="entry name" value="GatB_Yqey"/>
    <property type="match status" value="1"/>
</dbReference>
<dbReference type="SMART" id="SM00845">
    <property type="entry name" value="GatB_Yqey"/>
    <property type="match status" value="1"/>
</dbReference>
<dbReference type="SUPFAM" id="SSF89095">
    <property type="entry name" value="GatB/YqeY motif"/>
    <property type="match status" value="1"/>
</dbReference>
<dbReference type="SUPFAM" id="SSF55931">
    <property type="entry name" value="Glutamine synthetase/guanido kinase"/>
    <property type="match status" value="1"/>
</dbReference>
<dbReference type="PROSITE" id="PS01234">
    <property type="entry name" value="GATB"/>
    <property type="match status" value="1"/>
</dbReference>
<evidence type="ECO:0000255" key="1">
    <source>
        <dbReference type="HAMAP-Rule" id="MF_00121"/>
    </source>
</evidence>
<comment type="function">
    <text evidence="1">Allows the formation of correctly charged Asn-tRNA(Asn) or Gln-tRNA(Gln) through the transamidation of misacylated Asp-tRNA(Asn) or Glu-tRNA(Gln) in organisms which lack either or both of asparaginyl-tRNA or glutaminyl-tRNA synthetases. The reaction takes place in the presence of glutamine and ATP through an activated phospho-Asp-tRNA(Asn) or phospho-Glu-tRNA(Gln).</text>
</comment>
<comment type="catalytic activity">
    <reaction evidence="1">
        <text>L-glutamyl-tRNA(Gln) + L-glutamine + ATP + H2O = L-glutaminyl-tRNA(Gln) + L-glutamate + ADP + phosphate + H(+)</text>
        <dbReference type="Rhea" id="RHEA:17521"/>
        <dbReference type="Rhea" id="RHEA-COMP:9681"/>
        <dbReference type="Rhea" id="RHEA-COMP:9684"/>
        <dbReference type="ChEBI" id="CHEBI:15377"/>
        <dbReference type="ChEBI" id="CHEBI:15378"/>
        <dbReference type="ChEBI" id="CHEBI:29985"/>
        <dbReference type="ChEBI" id="CHEBI:30616"/>
        <dbReference type="ChEBI" id="CHEBI:43474"/>
        <dbReference type="ChEBI" id="CHEBI:58359"/>
        <dbReference type="ChEBI" id="CHEBI:78520"/>
        <dbReference type="ChEBI" id="CHEBI:78521"/>
        <dbReference type="ChEBI" id="CHEBI:456216"/>
    </reaction>
</comment>
<comment type="catalytic activity">
    <reaction evidence="1">
        <text>L-aspartyl-tRNA(Asn) + L-glutamine + ATP + H2O = L-asparaginyl-tRNA(Asn) + L-glutamate + ADP + phosphate + 2 H(+)</text>
        <dbReference type="Rhea" id="RHEA:14513"/>
        <dbReference type="Rhea" id="RHEA-COMP:9674"/>
        <dbReference type="Rhea" id="RHEA-COMP:9677"/>
        <dbReference type="ChEBI" id="CHEBI:15377"/>
        <dbReference type="ChEBI" id="CHEBI:15378"/>
        <dbReference type="ChEBI" id="CHEBI:29985"/>
        <dbReference type="ChEBI" id="CHEBI:30616"/>
        <dbReference type="ChEBI" id="CHEBI:43474"/>
        <dbReference type="ChEBI" id="CHEBI:58359"/>
        <dbReference type="ChEBI" id="CHEBI:78515"/>
        <dbReference type="ChEBI" id="CHEBI:78516"/>
        <dbReference type="ChEBI" id="CHEBI:456216"/>
    </reaction>
</comment>
<comment type="subunit">
    <text evidence="1">Heterotrimer of A, B and C subunits.</text>
</comment>
<comment type="similarity">
    <text evidence="1">Belongs to the GatB/GatE family. GatB subfamily.</text>
</comment>
<reference key="1">
    <citation type="submission" date="2006-12" db="EMBL/GenBank/DDBJ databases">
        <title>Complete sequence of Chlorobium phaeobacteroides DSM 266.</title>
        <authorList>
            <consortium name="US DOE Joint Genome Institute"/>
            <person name="Copeland A."/>
            <person name="Lucas S."/>
            <person name="Lapidus A."/>
            <person name="Barry K."/>
            <person name="Detter J.C."/>
            <person name="Glavina del Rio T."/>
            <person name="Hammon N."/>
            <person name="Israni S."/>
            <person name="Pitluck S."/>
            <person name="Goltsman E."/>
            <person name="Schmutz J."/>
            <person name="Larimer F."/>
            <person name="Land M."/>
            <person name="Hauser L."/>
            <person name="Mikhailova N."/>
            <person name="Li T."/>
            <person name="Overmann J."/>
            <person name="Bryant D.A."/>
            <person name="Richardson P."/>
        </authorList>
    </citation>
    <scope>NUCLEOTIDE SEQUENCE [LARGE SCALE GENOMIC DNA]</scope>
    <source>
        <strain>DSM 266 / SMG 266 / 2430</strain>
    </source>
</reference>